<proteinExistence type="evidence at protein level"/>
<dbReference type="EMBL" id="EU282464">
    <property type="protein sequence ID" value="ABX83036.1"/>
    <property type="molecule type" value="Genomic_DNA"/>
</dbReference>
<dbReference type="EMBL" id="AP008211">
    <property type="status" value="NOT_ANNOTATED_CDS"/>
    <property type="molecule type" value="Genomic_DNA"/>
</dbReference>
<dbReference type="EMBL" id="AP014961">
    <property type="status" value="NOT_ANNOTATED_CDS"/>
    <property type="molecule type" value="Genomic_DNA"/>
</dbReference>
<dbReference type="EMBL" id="CM000142">
    <property type="protein sequence ID" value="EEE64544.1"/>
    <property type="molecule type" value="Genomic_DNA"/>
</dbReference>
<dbReference type="EMBL" id="AK243547">
    <property type="status" value="NOT_ANNOTATED_CDS"/>
    <property type="molecule type" value="mRNA"/>
</dbReference>
<dbReference type="STRING" id="39947.A9UGV7"/>
<dbReference type="PaxDb" id="39947-A9UGV7"/>
<dbReference type="eggNOG" id="ENOG502SZH2">
    <property type="taxonomic scope" value="Eukaryota"/>
</dbReference>
<dbReference type="HOGENOM" id="CLU_191899_0_0_1"/>
<dbReference type="InParanoid" id="A9UGV7"/>
<dbReference type="Proteomes" id="UP000000763">
    <property type="component" value="Chromosome 5"/>
</dbReference>
<dbReference type="Proteomes" id="UP000007752">
    <property type="component" value="Chromosome 5"/>
</dbReference>
<dbReference type="Proteomes" id="UP000059680">
    <property type="component" value="Chromosome 5"/>
</dbReference>
<dbReference type="GO" id="GO:0032578">
    <property type="term" value="C:aleurone grain membrane"/>
    <property type="evidence" value="ECO:0000314"/>
    <property type="project" value="UniProtKB"/>
</dbReference>
<dbReference type="GO" id="GO:0098552">
    <property type="term" value="C:side of membrane"/>
    <property type="evidence" value="ECO:0007669"/>
    <property type="project" value="UniProtKB-KW"/>
</dbReference>
<dbReference type="GO" id="GO:0005773">
    <property type="term" value="C:vacuole"/>
    <property type="evidence" value="ECO:0007669"/>
    <property type="project" value="UniProtKB-KW"/>
</dbReference>
<dbReference type="InterPro" id="IPR039281">
    <property type="entry name" value="AGP3/12/13/14/21"/>
</dbReference>
<dbReference type="PANTHER" id="PTHR34114">
    <property type="entry name" value="ARABINOGALACTAN PEPTIDE 1"/>
    <property type="match status" value="1"/>
</dbReference>
<dbReference type="PANTHER" id="PTHR34114:SF24">
    <property type="entry name" value="ARABINOGALACTAN PEPTIDE 3"/>
    <property type="match status" value="1"/>
</dbReference>
<accession>A9UGV7</accession>
<evidence type="ECO:0000250" key="1"/>
<evidence type="ECO:0000255" key="2"/>
<evidence type="ECO:0000269" key="3">
    <source>
    </source>
</evidence>
<evidence type="ECO:0000305" key="4"/>
<protein>
    <recommendedName>
        <fullName>Arabinogalactan peptide 3</fullName>
        <shortName>OsAGPEP3</shortName>
    </recommendedName>
</protein>
<feature type="signal peptide" evidence="3">
    <location>
        <begin position="1"/>
        <end position="26"/>
    </location>
</feature>
<feature type="chain" id="PRO_0000397894" description="Arabinogalactan peptide 3">
    <location>
        <begin position="27"/>
        <end position="36"/>
    </location>
</feature>
<feature type="propeptide" id="PRO_0000397895" description="Removed in mature form" evidence="2">
    <location>
        <begin position="37"/>
        <end position="63"/>
    </location>
</feature>
<feature type="lipid moiety-binding region" description="GPI-anchor amidated serine" evidence="2">
    <location>
        <position position="36"/>
    </location>
</feature>
<reference key="1">
    <citation type="journal article" date="2004" name="Plant Cell Physiol.">
        <title>Isolation and identification of glycosylphosphatidylinositol-anchored arabinogalactan proteins and novel beta-glucosyl Yariv-reactive proteins from seeds of rice (Oryza sativa).</title>
        <authorList>
            <person name="Mashiguchi K."/>
            <person name="Yamaguchi I."/>
            <person name="Suzuki Y."/>
        </authorList>
    </citation>
    <scope>NUCLEOTIDE SEQUENCE [GENOMIC DNA]</scope>
    <scope>PROTEIN SEQUENCE OF 27-36</scope>
    <scope>TISSUE SPECIFICITY</scope>
    <scope>GLYCOSYLATION</scope>
    <source>
        <strain>cv. Koshihikari</strain>
        <tissue>Aleurone</tissue>
    </source>
</reference>
<reference key="2">
    <citation type="journal article" date="2005" name="Nature">
        <title>The map-based sequence of the rice genome.</title>
        <authorList>
            <consortium name="International rice genome sequencing project (IRGSP)"/>
        </authorList>
    </citation>
    <scope>NUCLEOTIDE SEQUENCE [LARGE SCALE GENOMIC DNA]</scope>
    <source>
        <strain>cv. Nipponbare</strain>
    </source>
</reference>
<reference key="3">
    <citation type="journal article" date="2008" name="Nucleic Acids Res.">
        <title>The rice annotation project database (RAP-DB): 2008 update.</title>
        <authorList>
            <consortium name="The rice annotation project (RAP)"/>
        </authorList>
    </citation>
    <scope>GENOME REANNOTATION</scope>
    <source>
        <strain>cv. Nipponbare</strain>
    </source>
</reference>
<reference key="4">
    <citation type="journal article" date="2013" name="Rice">
        <title>Improvement of the Oryza sativa Nipponbare reference genome using next generation sequence and optical map data.</title>
        <authorList>
            <person name="Kawahara Y."/>
            <person name="de la Bastide M."/>
            <person name="Hamilton J.P."/>
            <person name="Kanamori H."/>
            <person name="McCombie W.R."/>
            <person name="Ouyang S."/>
            <person name="Schwartz D.C."/>
            <person name="Tanaka T."/>
            <person name="Wu J."/>
            <person name="Zhou S."/>
            <person name="Childs K.L."/>
            <person name="Davidson R.M."/>
            <person name="Lin H."/>
            <person name="Quesada-Ocampo L."/>
            <person name="Vaillancourt B."/>
            <person name="Sakai H."/>
            <person name="Lee S.S."/>
            <person name="Kim J."/>
            <person name="Numa H."/>
            <person name="Itoh T."/>
            <person name="Buell C.R."/>
            <person name="Matsumoto T."/>
        </authorList>
    </citation>
    <scope>GENOME REANNOTATION</scope>
    <source>
        <strain>cv. Nipponbare</strain>
    </source>
</reference>
<reference key="5">
    <citation type="journal article" date="2005" name="PLoS Biol.">
        <title>The genomes of Oryza sativa: a history of duplications.</title>
        <authorList>
            <person name="Yu J."/>
            <person name="Wang J."/>
            <person name="Lin W."/>
            <person name="Li S."/>
            <person name="Li H."/>
            <person name="Zhou J."/>
            <person name="Ni P."/>
            <person name="Dong W."/>
            <person name="Hu S."/>
            <person name="Zeng C."/>
            <person name="Zhang J."/>
            <person name="Zhang Y."/>
            <person name="Li R."/>
            <person name="Xu Z."/>
            <person name="Li S."/>
            <person name="Li X."/>
            <person name="Zheng H."/>
            <person name="Cong L."/>
            <person name="Lin L."/>
            <person name="Yin J."/>
            <person name="Geng J."/>
            <person name="Li G."/>
            <person name="Shi J."/>
            <person name="Liu J."/>
            <person name="Lv H."/>
            <person name="Li J."/>
            <person name="Wang J."/>
            <person name="Deng Y."/>
            <person name="Ran L."/>
            <person name="Shi X."/>
            <person name="Wang X."/>
            <person name="Wu Q."/>
            <person name="Li C."/>
            <person name="Ren X."/>
            <person name="Wang J."/>
            <person name="Wang X."/>
            <person name="Li D."/>
            <person name="Liu D."/>
            <person name="Zhang X."/>
            <person name="Ji Z."/>
            <person name="Zhao W."/>
            <person name="Sun Y."/>
            <person name="Zhang Z."/>
            <person name="Bao J."/>
            <person name="Han Y."/>
            <person name="Dong L."/>
            <person name="Ji J."/>
            <person name="Chen P."/>
            <person name="Wu S."/>
            <person name="Liu J."/>
            <person name="Xiao Y."/>
            <person name="Bu D."/>
            <person name="Tan J."/>
            <person name="Yang L."/>
            <person name="Ye C."/>
            <person name="Zhang J."/>
            <person name="Xu J."/>
            <person name="Zhou Y."/>
            <person name="Yu Y."/>
            <person name="Zhang B."/>
            <person name="Zhuang S."/>
            <person name="Wei H."/>
            <person name="Liu B."/>
            <person name="Lei M."/>
            <person name="Yu H."/>
            <person name="Li Y."/>
            <person name="Xu H."/>
            <person name="Wei S."/>
            <person name="He X."/>
            <person name="Fang L."/>
            <person name="Zhang Z."/>
            <person name="Zhang Y."/>
            <person name="Huang X."/>
            <person name="Su Z."/>
            <person name="Tong W."/>
            <person name="Li J."/>
            <person name="Tong Z."/>
            <person name="Li S."/>
            <person name="Ye J."/>
            <person name="Wang L."/>
            <person name="Fang L."/>
            <person name="Lei T."/>
            <person name="Chen C.-S."/>
            <person name="Chen H.-C."/>
            <person name="Xu Z."/>
            <person name="Li H."/>
            <person name="Huang H."/>
            <person name="Zhang F."/>
            <person name="Xu H."/>
            <person name="Li N."/>
            <person name="Zhao C."/>
            <person name="Li S."/>
            <person name="Dong L."/>
            <person name="Huang Y."/>
            <person name="Li L."/>
            <person name="Xi Y."/>
            <person name="Qi Q."/>
            <person name="Li W."/>
            <person name="Zhang B."/>
            <person name="Hu W."/>
            <person name="Zhang Y."/>
            <person name="Tian X."/>
            <person name="Jiao Y."/>
            <person name="Liang X."/>
            <person name="Jin J."/>
            <person name="Gao L."/>
            <person name="Zheng W."/>
            <person name="Hao B."/>
            <person name="Liu S.-M."/>
            <person name="Wang W."/>
            <person name="Yuan L."/>
            <person name="Cao M."/>
            <person name="McDermott J."/>
            <person name="Samudrala R."/>
            <person name="Wang J."/>
            <person name="Wong G.K.-S."/>
            <person name="Yang H."/>
        </authorList>
    </citation>
    <scope>NUCLEOTIDE SEQUENCE [LARGE SCALE GENOMIC DNA]</scope>
    <source>
        <strain>cv. Nipponbare</strain>
    </source>
</reference>
<reference key="6">
    <citation type="submission" date="2006-10" db="EMBL/GenBank/DDBJ databases">
        <title>Oryza sativa full length cDNA.</title>
        <authorList>
            <consortium name="The rice full-length cDNA consortium"/>
        </authorList>
    </citation>
    <scope>NUCLEOTIDE SEQUENCE [LARGE SCALE MRNA]</scope>
    <source>
        <strain>cv. Nipponbare</strain>
    </source>
</reference>
<keyword id="KW-0903">Direct protein sequencing</keyword>
<keyword id="KW-0325">Glycoprotein</keyword>
<keyword id="KW-0336">GPI-anchor</keyword>
<keyword id="KW-0379">Hydroxylation</keyword>
<keyword id="KW-0449">Lipoprotein</keyword>
<keyword id="KW-0472">Membrane</keyword>
<keyword id="KW-0654">Proteoglycan</keyword>
<keyword id="KW-1185">Reference proteome</keyword>
<keyword id="KW-0732">Signal</keyword>
<keyword id="KW-0926">Vacuole</keyword>
<sequence length="63" mass="5938">MASRILYAAAVVAAVAVSSLAGVAYAADAPAPSPTSGAAAVSSSLVAAVLCPAVALLLGNLRQ</sequence>
<name>APEP3_ORYSJ</name>
<organism>
    <name type="scientific">Oryza sativa subsp. japonica</name>
    <name type="common">Rice</name>
    <dbReference type="NCBI Taxonomy" id="39947"/>
    <lineage>
        <taxon>Eukaryota</taxon>
        <taxon>Viridiplantae</taxon>
        <taxon>Streptophyta</taxon>
        <taxon>Embryophyta</taxon>
        <taxon>Tracheophyta</taxon>
        <taxon>Spermatophyta</taxon>
        <taxon>Magnoliopsida</taxon>
        <taxon>Liliopsida</taxon>
        <taxon>Poales</taxon>
        <taxon>Poaceae</taxon>
        <taxon>BOP clade</taxon>
        <taxon>Oryzoideae</taxon>
        <taxon>Oryzeae</taxon>
        <taxon>Oryzinae</taxon>
        <taxon>Oryza</taxon>
        <taxon>Oryza sativa</taxon>
    </lineage>
</organism>
<comment type="function">
    <text evidence="1">Proteoglycan that seems to be implicated in diverse developmental roles such as differentiation, cell-cell recognition, embryogenesis and programmed cell death.</text>
</comment>
<comment type="subcellular location">
    <subcellularLocation>
        <location evidence="4">Vacuole</location>
        <location evidence="4">Aleurone grain membrane</location>
        <topology evidence="4">Lipid-anchor</topology>
        <topology evidence="4">GPI-anchor</topology>
    </subcellularLocation>
</comment>
<comment type="tissue specificity">
    <text evidence="3">Expressed in roots, stems, leaves, flowers and seeds.</text>
</comment>
<comment type="PTM">
    <text evidence="3">O-glycosylated on hydroxyprolines; noncontiguous hydroxylproline residues are glycosylated with arabinogalactan.</text>
</comment>
<comment type="similarity">
    <text evidence="4">Belongs to the AG-peptide AGP family.</text>
</comment>
<gene>
    <name type="primary">AGPEP3</name>
    <name type="ordered locus">Os05g0541750</name>
    <name type="ORF">OsJ_19396</name>
</gene>